<feature type="chain" id="PRO_0000308140" description="Large ribosomal subunit protein uL1">
    <location>
        <begin position="1"/>
        <end position="234"/>
    </location>
</feature>
<dbReference type="EMBL" id="CP000308">
    <property type="protein sequence ID" value="ABG15584.1"/>
    <property type="molecule type" value="Genomic_DNA"/>
</dbReference>
<dbReference type="RefSeq" id="WP_002210673.1">
    <property type="nucleotide sequence ID" value="NZ_CP009906.1"/>
</dbReference>
<dbReference type="SMR" id="Q1C1T8"/>
<dbReference type="GeneID" id="57974968"/>
<dbReference type="KEGG" id="ypa:YPA_3622"/>
<dbReference type="Proteomes" id="UP000001971">
    <property type="component" value="Chromosome"/>
</dbReference>
<dbReference type="GO" id="GO:0022625">
    <property type="term" value="C:cytosolic large ribosomal subunit"/>
    <property type="evidence" value="ECO:0007669"/>
    <property type="project" value="TreeGrafter"/>
</dbReference>
<dbReference type="GO" id="GO:0019843">
    <property type="term" value="F:rRNA binding"/>
    <property type="evidence" value="ECO:0007669"/>
    <property type="project" value="UniProtKB-UniRule"/>
</dbReference>
<dbReference type="GO" id="GO:0003735">
    <property type="term" value="F:structural constituent of ribosome"/>
    <property type="evidence" value="ECO:0007669"/>
    <property type="project" value="InterPro"/>
</dbReference>
<dbReference type="GO" id="GO:0000049">
    <property type="term" value="F:tRNA binding"/>
    <property type="evidence" value="ECO:0007669"/>
    <property type="project" value="UniProtKB-KW"/>
</dbReference>
<dbReference type="GO" id="GO:0006417">
    <property type="term" value="P:regulation of translation"/>
    <property type="evidence" value="ECO:0007669"/>
    <property type="project" value="UniProtKB-KW"/>
</dbReference>
<dbReference type="GO" id="GO:0006412">
    <property type="term" value="P:translation"/>
    <property type="evidence" value="ECO:0007669"/>
    <property type="project" value="UniProtKB-UniRule"/>
</dbReference>
<dbReference type="CDD" id="cd00403">
    <property type="entry name" value="Ribosomal_L1"/>
    <property type="match status" value="1"/>
</dbReference>
<dbReference type="FunFam" id="3.40.50.790:FF:000001">
    <property type="entry name" value="50S ribosomal protein L1"/>
    <property type="match status" value="1"/>
</dbReference>
<dbReference type="Gene3D" id="3.30.190.20">
    <property type="match status" value="1"/>
</dbReference>
<dbReference type="Gene3D" id="3.40.50.790">
    <property type="match status" value="1"/>
</dbReference>
<dbReference type="HAMAP" id="MF_01318_B">
    <property type="entry name" value="Ribosomal_uL1_B"/>
    <property type="match status" value="1"/>
</dbReference>
<dbReference type="InterPro" id="IPR005878">
    <property type="entry name" value="Ribosom_uL1_bac-type"/>
</dbReference>
<dbReference type="InterPro" id="IPR002143">
    <property type="entry name" value="Ribosomal_uL1"/>
</dbReference>
<dbReference type="InterPro" id="IPR023674">
    <property type="entry name" value="Ribosomal_uL1-like"/>
</dbReference>
<dbReference type="InterPro" id="IPR028364">
    <property type="entry name" value="Ribosomal_uL1/biogenesis"/>
</dbReference>
<dbReference type="InterPro" id="IPR016095">
    <property type="entry name" value="Ribosomal_uL1_3-a/b-sand"/>
</dbReference>
<dbReference type="InterPro" id="IPR023673">
    <property type="entry name" value="Ribosomal_uL1_CS"/>
</dbReference>
<dbReference type="NCBIfam" id="TIGR01169">
    <property type="entry name" value="rplA_bact"/>
    <property type="match status" value="1"/>
</dbReference>
<dbReference type="PANTHER" id="PTHR36427">
    <property type="entry name" value="54S RIBOSOMAL PROTEIN L1, MITOCHONDRIAL"/>
    <property type="match status" value="1"/>
</dbReference>
<dbReference type="PANTHER" id="PTHR36427:SF3">
    <property type="entry name" value="LARGE RIBOSOMAL SUBUNIT PROTEIN UL1M"/>
    <property type="match status" value="1"/>
</dbReference>
<dbReference type="Pfam" id="PF00687">
    <property type="entry name" value="Ribosomal_L1"/>
    <property type="match status" value="1"/>
</dbReference>
<dbReference type="PIRSF" id="PIRSF002155">
    <property type="entry name" value="Ribosomal_L1"/>
    <property type="match status" value="1"/>
</dbReference>
<dbReference type="SUPFAM" id="SSF56808">
    <property type="entry name" value="Ribosomal protein L1"/>
    <property type="match status" value="1"/>
</dbReference>
<dbReference type="PROSITE" id="PS01199">
    <property type="entry name" value="RIBOSOMAL_L1"/>
    <property type="match status" value="1"/>
</dbReference>
<name>RL1_YERPA</name>
<organism>
    <name type="scientific">Yersinia pestis bv. Antiqua (strain Antiqua)</name>
    <dbReference type="NCBI Taxonomy" id="360102"/>
    <lineage>
        <taxon>Bacteria</taxon>
        <taxon>Pseudomonadati</taxon>
        <taxon>Pseudomonadota</taxon>
        <taxon>Gammaproteobacteria</taxon>
        <taxon>Enterobacterales</taxon>
        <taxon>Yersiniaceae</taxon>
        <taxon>Yersinia</taxon>
    </lineage>
</organism>
<reference key="1">
    <citation type="journal article" date="2006" name="J. Bacteriol.">
        <title>Complete genome sequence of Yersinia pestis strains Antiqua and Nepal516: evidence of gene reduction in an emerging pathogen.</title>
        <authorList>
            <person name="Chain P.S.G."/>
            <person name="Hu P."/>
            <person name="Malfatti S.A."/>
            <person name="Radnedge L."/>
            <person name="Larimer F."/>
            <person name="Vergez L.M."/>
            <person name="Worsham P."/>
            <person name="Chu M.C."/>
            <person name="Andersen G.L."/>
        </authorList>
    </citation>
    <scope>NUCLEOTIDE SEQUENCE [LARGE SCALE GENOMIC DNA]</scope>
    <source>
        <strain>Antiqua</strain>
    </source>
</reference>
<sequence length="234" mass="24803">MAKLTKRMRVIRDKVDVTKQYDINEAVALLKELATAKFVESVDVAVNLGIDARKSDQNVRGATVLPHGTGRSVRVAVFAQGANAEAAKEAGAELVGMDDLADQIKKGEMNFDVVIASPDAMRVVGQLGQILGPRGLMPNPKVGTVTPNVAEAVKNAKAGQVRYRNDKNGIIHTTIGKVDFDSDKLKENLESLVVALKKAKPATAKGIYIKKISLSTTMGAGVAIDQSGLTAVVN</sequence>
<evidence type="ECO:0000255" key="1">
    <source>
        <dbReference type="HAMAP-Rule" id="MF_01318"/>
    </source>
</evidence>
<evidence type="ECO:0000305" key="2"/>
<keyword id="KW-0678">Repressor</keyword>
<keyword id="KW-0687">Ribonucleoprotein</keyword>
<keyword id="KW-0689">Ribosomal protein</keyword>
<keyword id="KW-0694">RNA-binding</keyword>
<keyword id="KW-0699">rRNA-binding</keyword>
<keyword id="KW-0810">Translation regulation</keyword>
<keyword id="KW-0820">tRNA-binding</keyword>
<proteinExistence type="inferred from homology"/>
<protein>
    <recommendedName>
        <fullName evidence="1">Large ribosomal subunit protein uL1</fullName>
    </recommendedName>
    <alternativeName>
        <fullName evidence="2">50S ribosomal protein L1</fullName>
    </alternativeName>
</protein>
<gene>
    <name evidence="1" type="primary">rplA</name>
    <name type="ordered locus">YPA_3622</name>
</gene>
<accession>Q1C1T8</accession>
<comment type="function">
    <text evidence="1">Binds directly to 23S rRNA. The L1 stalk is quite mobile in the ribosome, and is involved in E site tRNA release.</text>
</comment>
<comment type="function">
    <text evidence="1">Protein L1 is also a translational repressor protein, it controls the translation of the L11 operon by binding to its mRNA.</text>
</comment>
<comment type="subunit">
    <text evidence="1">Part of the 50S ribosomal subunit.</text>
</comment>
<comment type="similarity">
    <text evidence="1">Belongs to the universal ribosomal protein uL1 family.</text>
</comment>